<name>HPRT_SHIFL</name>
<keyword id="KW-0963">Cytoplasm</keyword>
<keyword id="KW-0328">Glycosyltransferase</keyword>
<keyword id="KW-0460">Magnesium</keyword>
<keyword id="KW-0479">Metal-binding</keyword>
<keyword id="KW-0547">Nucleotide-binding</keyword>
<keyword id="KW-0660">Purine salvage</keyword>
<keyword id="KW-1185">Reference proteome</keyword>
<keyword id="KW-0808">Transferase</keyword>
<dbReference type="EC" id="2.4.2.8" evidence="2"/>
<dbReference type="EMBL" id="AE005674">
    <property type="protein sequence ID" value="AAN41785.2"/>
    <property type="status" value="ALT_INIT"/>
    <property type="molecule type" value="Genomic_DNA"/>
</dbReference>
<dbReference type="EMBL" id="AE014073">
    <property type="protein sequence ID" value="AAP15666.1"/>
    <property type="status" value="ALT_INIT"/>
    <property type="molecule type" value="Genomic_DNA"/>
</dbReference>
<dbReference type="RefSeq" id="NP_706078.4">
    <property type="nucleotide sequence ID" value="NC_004337.2"/>
</dbReference>
<dbReference type="RefSeq" id="WP_000683335.1">
    <property type="nucleotide sequence ID" value="NZ_WPGW01000007.1"/>
</dbReference>
<dbReference type="SMR" id="P0A9M4"/>
<dbReference type="STRING" id="198214.SF0122"/>
<dbReference type="PaxDb" id="198214-SF0122"/>
<dbReference type="GeneID" id="1024487"/>
<dbReference type="GeneID" id="86862633"/>
<dbReference type="KEGG" id="sfl:SF0122"/>
<dbReference type="KEGG" id="sfx:S0124"/>
<dbReference type="PATRIC" id="fig|198214.7.peg.138"/>
<dbReference type="HOGENOM" id="CLU_073615_0_0_6"/>
<dbReference type="UniPathway" id="UPA00591">
    <property type="reaction ID" value="UER00648"/>
</dbReference>
<dbReference type="Proteomes" id="UP000001006">
    <property type="component" value="Chromosome"/>
</dbReference>
<dbReference type="Proteomes" id="UP000002673">
    <property type="component" value="Chromosome"/>
</dbReference>
<dbReference type="GO" id="GO:0005829">
    <property type="term" value="C:cytosol"/>
    <property type="evidence" value="ECO:0007669"/>
    <property type="project" value="TreeGrafter"/>
</dbReference>
<dbReference type="GO" id="GO:0052657">
    <property type="term" value="F:guanine phosphoribosyltransferase activity"/>
    <property type="evidence" value="ECO:0007669"/>
    <property type="project" value="RHEA"/>
</dbReference>
<dbReference type="GO" id="GO:0004422">
    <property type="term" value="F:hypoxanthine phosphoribosyltransferase activity"/>
    <property type="evidence" value="ECO:0007669"/>
    <property type="project" value="InterPro"/>
</dbReference>
<dbReference type="GO" id="GO:0000287">
    <property type="term" value="F:magnesium ion binding"/>
    <property type="evidence" value="ECO:0007669"/>
    <property type="project" value="TreeGrafter"/>
</dbReference>
<dbReference type="GO" id="GO:0000166">
    <property type="term" value="F:nucleotide binding"/>
    <property type="evidence" value="ECO:0007669"/>
    <property type="project" value="UniProtKB-KW"/>
</dbReference>
<dbReference type="GO" id="GO:0032263">
    <property type="term" value="P:GMP salvage"/>
    <property type="evidence" value="ECO:0007669"/>
    <property type="project" value="TreeGrafter"/>
</dbReference>
<dbReference type="GO" id="GO:0006178">
    <property type="term" value="P:guanine salvage"/>
    <property type="evidence" value="ECO:0007669"/>
    <property type="project" value="TreeGrafter"/>
</dbReference>
<dbReference type="GO" id="GO:0046100">
    <property type="term" value="P:hypoxanthine metabolic process"/>
    <property type="evidence" value="ECO:0007669"/>
    <property type="project" value="TreeGrafter"/>
</dbReference>
<dbReference type="GO" id="GO:0032264">
    <property type="term" value="P:IMP salvage"/>
    <property type="evidence" value="ECO:0007669"/>
    <property type="project" value="UniProtKB-UniPathway"/>
</dbReference>
<dbReference type="GO" id="GO:0006166">
    <property type="term" value="P:purine ribonucleoside salvage"/>
    <property type="evidence" value="ECO:0007669"/>
    <property type="project" value="UniProtKB-KW"/>
</dbReference>
<dbReference type="CDD" id="cd06223">
    <property type="entry name" value="PRTases_typeI"/>
    <property type="match status" value="1"/>
</dbReference>
<dbReference type="FunFam" id="3.40.50.2020:FF:000006">
    <property type="entry name" value="Hypoxanthine phosphoribosyltransferase"/>
    <property type="match status" value="1"/>
</dbReference>
<dbReference type="Gene3D" id="3.40.50.2020">
    <property type="match status" value="1"/>
</dbReference>
<dbReference type="InterPro" id="IPR050408">
    <property type="entry name" value="HGPRT"/>
</dbReference>
<dbReference type="InterPro" id="IPR005904">
    <property type="entry name" value="Hxn_phspho_trans"/>
</dbReference>
<dbReference type="InterPro" id="IPR000836">
    <property type="entry name" value="PRibTrfase_dom"/>
</dbReference>
<dbReference type="InterPro" id="IPR029057">
    <property type="entry name" value="PRTase-like"/>
</dbReference>
<dbReference type="NCBIfam" id="TIGR01203">
    <property type="entry name" value="HGPRTase"/>
    <property type="match status" value="1"/>
</dbReference>
<dbReference type="PANTHER" id="PTHR43340:SF1">
    <property type="entry name" value="HYPOXANTHINE PHOSPHORIBOSYLTRANSFERASE"/>
    <property type="match status" value="1"/>
</dbReference>
<dbReference type="PANTHER" id="PTHR43340">
    <property type="entry name" value="HYPOXANTHINE-GUANINE PHOSPHORIBOSYLTRANSFERASE"/>
    <property type="match status" value="1"/>
</dbReference>
<dbReference type="Pfam" id="PF00156">
    <property type="entry name" value="Pribosyltran"/>
    <property type="match status" value="1"/>
</dbReference>
<dbReference type="SUPFAM" id="SSF53271">
    <property type="entry name" value="PRTase-like"/>
    <property type="match status" value="1"/>
</dbReference>
<dbReference type="PROSITE" id="PS00103">
    <property type="entry name" value="PUR_PYR_PR_TRANSFER"/>
    <property type="match status" value="1"/>
</dbReference>
<sequence length="178" mass="20115">MKHTVEVMIPEAEIKARIAELGRQITERYKDSGSDMVLVGLLRGSFMFMADLCREVQVSHEVDFMTASSYGSGMSTTRDVKILKDLDEDIRGKDVLIVEDIIDSGNTLSKVREILSLREPKSLAICTLLDKPSRREVNVPVEFIGFSIPDEFVVGYGIDYAQRYRHLPYIGKVILLDE</sequence>
<comment type="function">
    <text evidence="2">Purine salvage pathway enzyme which catalyzes the transfer of the ribosyl-5-phosphate group from 5-phospho-alpha-D-ribose 1-diphosphate (PRPP) to the N9 position of hypoxanthine to yield IMP (inosine 5'-monophosphate). To a lesser extent, can also act on guanine leading to GMP, but shows a highly less efficient activity with xanthine.</text>
</comment>
<comment type="catalytic activity">
    <reaction evidence="2">
        <text>IMP + diphosphate = hypoxanthine + 5-phospho-alpha-D-ribose 1-diphosphate</text>
        <dbReference type="Rhea" id="RHEA:17973"/>
        <dbReference type="ChEBI" id="CHEBI:17368"/>
        <dbReference type="ChEBI" id="CHEBI:33019"/>
        <dbReference type="ChEBI" id="CHEBI:58017"/>
        <dbReference type="ChEBI" id="CHEBI:58053"/>
        <dbReference type="EC" id="2.4.2.8"/>
    </reaction>
    <physiologicalReaction direction="right-to-left" evidence="2">
        <dbReference type="Rhea" id="RHEA:17975"/>
    </physiologicalReaction>
</comment>
<comment type="catalytic activity">
    <reaction evidence="2">
        <text>GMP + diphosphate = guanine + 5-phospho-alpha-D-ribose 1-diphosphate</text>
        <dbReference type="Rhea" id="RHEA:25424"/>
        <dbReference type="ChEBI" id="CHEBI:16235"/>
        <dbReference type="ChEBI" id="CHEBI:33019"/>
        <dbReference type="ChEBI" id="CHEBI:58017"/>
        <dbReference type="ChEBI" id="CHEBI:58115"/>
        <dbReference type="EC" id="2.4.2.8"/>
    </reaction>
    <physiologicalReaction direction="right-to-left" evidence="2">
        <dbReference type="Rhea" id="RHEA:25426"/>
    </physiologicalReaction>
</comment>
<comment type="cofactor">
    <cofactor evidence="2">
        <name>Mg(2+)</name>
        <dbReference type="ChEBI" id="CHEBI:18420"/>
    </cofactor>
</comment>
<comment type="pathway">
    <text evidence="2">Purine metabolism; IMP biosynthesis via salvage pathway; IMP from hypoxanthine: step 1/1.</text>
</comment>
<comment type="subunit">
    <text evidence="2">Homotetramer.</text>
</comment>
<comment type="subcellular location">
    <subcellularLocation>
        <location evidence="1">Cytoplasm</location>
    </subcellularLocation>
</comment>
<comment type="similarity">
    <text evidence="4">Belongs to the purine/pyrimidine phosphoribosyltransferase family.</text>
</comment>
<comment type="sequence caution" evidence="4">
    <conflict type="erroneous initiation">
        <sequence resource="EMBL-CDS" id="AAN41785"/>
    </conflict>
    <text>Extended N-terminus.</text>
</comment>
<comment type="sequence caution" evidence="4">
    <conflict type="erroneous initiation">
        <sequence resource="EMBL-CDS" id="AAP15666"/>
    </conflict>
    <text>Extended N-terminus.</text>
</comment>
<accession>P0A9M4</accession>
<accession>P36766</accession>
<reference key="1">
    <citation type="journal article" date="2002" name="Nucleic Acids Res.">
        <title>Genome sequence of Shigella flexneri 2a: insights into pathogenicity through comparison with genomes of Escherichia coli K12 and O157.</title>
        <authorList>
            <person name="Jin Q."/>
            <person name="Yuan Z."/>
            <person name="Xu J."/>
            <person name="Wang Y."/>
            <person name="Shen Y."/>
            <person name="Lu W."/>
            <person name="Wang J."/>
            <person name="Liu H."/>
            <person name="Yang J."/>
            <person name="Yang F."/>
            <person name="Zhang X."/>
            <person name="Zhang J."/>
            <person name="Yang G."/>
            <person name="Wu H."/>
            <person name="Qu D."/>
            <person name="Dong J."/>
            <person name="Sun L."/>
            <person name="Xue Y."/>
            <person name="Zhao A."/>
            <person name="Gao Y."/>
            <person name="Zhu J."/>
            <person name="Kan B."/>
            <person name="Ding K."/>
            <person name="Chen S."/>
            <person name="Cheng H."/>
            <person name="Yao Z."/>
            <person name="He B."/>
            <person name="Chen R."/>
            <person name="Ma D."/>
            <person name="Qiang B."/>
            <person name="Wen Y."/>
            <person name="Hou Y."/>
            <person name="Yu J."/>
        </authorList>
    </citation>
    <scope>NUCLEOTIDE SEQUENCE [LARGE SCALE GENOMIC DNA]</scope>
    <source>
        <strain>301 / Serotype 2a</strain>
    </source>
</reference>
<reference key="2">
    <citation type="journal article" date="2003" name="Infect. Immun.">
        <title>Complete genome sequence and comparative genomics of Shigella flexneri serotype 2a strain 2457T.</title>
        <authorList>
            <person name="Wei J."/>
            <person name="Goldberg M.B."/>
            <person name="Burland V."/>
            <person name="Venkatesan M.M."/>
            <person name="Deng W."/>
            <person name="Fournier G."/>
            <person name="Mayhew G.F."/>
            <person name="Plunkett G. III"/>
            <person name="Rose D.J."/>
            <person name="Darling A."/>
            <person name="Mau B."/>
            <person name="Perna N.T."/>
            <person name="Payne S.M."/>
            <person name="Runyen-Janecky L.J."/>
            <person name="Zhou S."/>
            <person name="Schwartz D.C."/>
            <person name="Blattner F.R."/>
        </authorList>
    </citation>
    <scope>NUCLEOTIDE SEQUENCE [LARGE SCALE GENOMIC DNA]</scope>
    <source>
        <strain>ATCC 700930 / 2457T / Serotype 2a</strain>
    </source>
</reference>
<proteinExistence type="inferred from homology"/>
<evidence type="ECO:0000250" key="1"/>
<evidence type="ECO:0000250" key="2">
    <source>
        <dbReference type="UniProtKB" id="P0A9M2"/>
    </source>
</evidence>
<evidence type="ECO:0000250" key="3">
    <source>
        <dbReference type="UniProtKB" id="P9WHQ9"/>
    </source>
</evidence>
<evidence type="ECO:0000305" key="4"/>
<organism>
    <name type="scientific">Shigella flexneri</name>
    <dbReference type="NCBI Taxonomy" id="623"/>
    <lineage>
        <taxon>Bacteria</taxon>
        <taxon>Pseudomonadati</taxon>
        <taxon>Pseudomonadota</taxon>
        <taxon>Gammaproteobacteria</taxon>
        <taxon>Enterobacterales</taxon>
        <taxon>Enterobacteriaceae</taxon>
        <taxon>Shigella</taxon>
    </lineage>
</organism>
<gene>
    <name type="primary">hpt</name>
    <name type="ordered locus">SF0122</name>
    <name type="ordered locus">S0124</name>
</gene>
<protein>
    <recommendedName>
        <fullName>Hypoxanthine phosphoribosyltransferase</fullName>
        <shortName>HPRT</shortName>
        <ecNumber evidence="2">2.4.2.8</ecNumber>
    </recommendedName>
</protein>
<feature type="chain" id="PRO_0000139636" description="Hypoxanthine phosphoribosyltransferase">
    <location>
        <begin position="1"/>
        <end position="178"/>
    </location>
</feature>
<feature type="active site" description="Proton acceptor" evidence="2">
    <location>
        <position position="103"/>
    </location>
</feature>
<feature type="binding site" evidence="3">
    <location>
        <position position="43"/>
    </location>
    <ligand>
        <name>diphosphate</name>
        <dbReference type="ChEBI" id="CHEBI:33019"/>
    </ligand>
</feature>
<feature type="binding site" evidence="3">
    <location>
        <position position="44"/>
    </location>
    <ligand>
        <name>diphosphate</name>
        <dbReference type="ChEBI" id="CHEBI:33019"/>
    </ligand>
</feature>
<feature type="binding site" evidence="2">
    <location>
        <position position="99"/>
    </location>
    <ligand>
        <name>GMP</name>
        <dbReference type="ChEBI" id="CHEBI:58115"/>
    </ligand>
</feature>
<feature type="binding site" evidence="2">
    <location>
        <position position="99"/>
    </location>
    <ligand>
        <name>IMP</name>
        <dbReference type="ChEBI" id="CHEBI:58053"/>
    </ligand>
</feature>
<feature type="binding site" evidence="2">
    <location>
        <position position="99"/>
    </location>
    <ligand>
        <name>Mg(2+)</name>
        <dbReference type="ChEBI" id="CHEBI:18420"/>
    </ligand>
</feature>
<feature type="binding site" evidence="2">
    <location>
        <position position="100"/>
    </location>
    <ligand>
        <name>Mg(2+)</name>
        <dbReference type="ChEBI" id="CHEBI:18420"/>
    </ligand>
</feature>
<feature type="binding site" evidence="2">
    <location>
        <begin position="103"/>
        <end position="108"/>
    </location>
    <ligand>
        <name>GMP</name>
        <dbReference type="ChEBI" id="CHEBI:58115"/>
    </ligand>
</feature>
<feature type="binding site" evidence="2">
    <location>
        <begin position="103"/>
        <end position="108"/>
    </location>
    <ligand>
        <name>IMP</name>
        <dbReference type="ChEBI" id="CHEBI:58053"/>
    </ligand>
</feature>
<feature type="binding site" evidence="2">
    <location>
        <position position="131"/>
    </location>
    <ligand>
        <name>GMP</name>
        <dbReference type="ChEBI" id="CHEBI:58115"/>
    </ligand>
</feature>
<feature type="binding site" evidence="2">
    <location>
        <position position="131"/>
    </location>
    <ligand>
        <name>IMP</name>
        <dbReference type="ChEBI" id="CHEBI:58053"/>
    </ligand>
</feature>
<feature type="binding site" evidence="2">
    <location>
        <position position="159"/>
    </location>
    <ligand>
        <name>GMP</name>
        <dbReference type="ChEBI" id="CHEBI:58115"/>
    </ligand>
</feature>
<feature type="binding site" evidence="3">
    <location>
        <position position="165"/>
    </location>
    <ligand>
        <name>diphosphate</name>
        <dbReference type="ChEBI" id="CHEBI:33019"/>
    </ligand>
</feature>